<gene>
    <name type="primary">rpl15</name>
</gene>
<comment type="function">
    <text evidence="2">Component of the large ribosomal subunit. The ribosome is a large ribonucleoprotein complex responsible for the synthesis of proteins in the cell.</text>
</comment>
<comment type="subunit">
    <text evidence="2">Component of the large ribosomal subunit.</text>
</comment>
<comment type="subcellular location">
    <subcellularLocation>
        <location evidence="2">Cytoplasm</location>
    </subcellularLocation>
</comment>
<comment type="similarity">
    <text evidence="3">Belongs to the eukaryotic ribosomal protein eL15 family.</text>
</comment>
<evidence type="ECO:0000250" key="1"/>
<evidence type="ECO:0000250" key="2">
    <source>
        <dbReference type="UniProtKB" id="P61313"/>
    </source>
</evidence>
<evidence type="ECO:0000305" key="3"/>
<organism>
    <name type="scientific">Siniperca knerii</name>
    <name type="common">Big-eye mandarin fish</name>
    <dbReference type="NCBI Taxonomy" id="214812"/>
    <lineage>
        <taxon>Eukaryota</taxon>
        <taxon>Metazoa</taxon>
        <taxon>Chordata</taxon>
        <taxon>Craniata</taxon>
        <taxon>Vertebrata</taxon>
        <taxon>Euteleostomi</taxon>
        <taxon>Actinopterygii</taxon>
        <taxon>Neopterygii</taxon>
        <taxon>Teleostei</taxon>
        <taxon>Neoteleostei</taxon>
        <taxon>Acanthomorphata</taxon>
        <taxon>Eupercaria</taxon>
        <taxon>Centrarchiformes</taxon>
        <taxon>Centrarchoidei</taxon>
        <taxon>Sinipercidae</taxon>
        <taxon>Siniperca</taxon>
    </lineage>
</organism>
<feature type="initiator methionine" description="Removed" evidence="1">
    <location>
        <position position="1"/>
    </location>
</feature>
<feature type="chain" id="PRO_0000127548" description="Large ribosomal subunit protein eL15">
    <location>
        <begin position="2"/>
        <end position="204"/>
    </location>
</feature>
<name>RL15_SINKN</name>
<reference key="1">
    <citation type="submission" date="2003-03" db="EMBL/GenBank/DDBJ databases">
        <title>Evaluating the potential of ribosomal protein L15 as a novel marker for phylogenetic analysis: a comparative analysis of 15 teleost RPL15 cDNAs.</title>
        <authorList>
            <person name="Song P."/>
            <person name="Zhang J."/>
            <person name="Xiang Z."/>
        </authorList>
    </citation>
    <scope>NUCLEOTIDE SEQUENCE [MRNA]</scope>
    <source>
        <tissue>Liver</tissue>
    </source>
</reference>
<protein>
    <recommendedName>
        <fullName evidence="3">Large ribosomal subunit protein eL15</fullName>
    </recommendedName>
    <alternativeName>
        <fullName>60S ribosomal protein L15</fullName>
    </alternativeName>
</protein>
<proteinExistence type="evidence at transcript level"/>
<sequence length="204" mass="24108">MGAYRYMQELWRKKQSDVMRFLLRVRCWQYRQLSNLHRAPRPTRPDKARRLGYKAKQGYVVYRVRVRRGGRKRPVPKGATYGKPVHHGVNQIKFARSLQSTAEERAGRHCGALRVLNSYWVGEDSTYKFFEVILIDPFHKAVRRNPDTQWITKAVHKHREMRGLTSAGKKSRGLGKGHKFHLTIGGSRRAAWKRRNTLQLRRYR</sequence>
<dbReference type="EMBL" id="AY249425">
    <property type="protein sequence ID" value="AAP35262.1"/>
    <property type="molecule type" value="mRNA"/>
</dbReference>
<dbReference type="SMR" id="Q7T3M9"/>
<dbReference type="GO" id="GO:0022625">
    <property type="term" value="C:cytosolic large ribosomal subunit"/>
    <property type="evidence" value="ECO:0007669"/>
    <property type="project" value="TreeGrafter"/>
</dbReference>
<dbReference type="GO" id="GO:0003723">
    <property type="term" value="F:RNA binding"/>
    <property type="evidence" value="ECO:0007669"/>
    <property type="project" value="TreeGrafter"/>
</dbReference>
<dbReference type="GO" id="GO:0003735">
    <property type="term" value="F:structural constituent of ribosome"/>
    <property type="evidence" value="ECO:0007669"/>
    <property type="project" value="InterPro"/>
</dbReference>
<dbReference type="GO" id="GO:0002181">
    <property type="term" value="P:cytoplasmic translation"/>
    <property type="evidence" value="ECO:0007669"/>
    <property type="project" value="TreeGrafter"/>
</dbReference>
<dbReference type="FunFam" id="3.40.1120.10:FF:000001">
    <property type="entry name" value="Ribosomal protein L15"/>
    <property type="match status" value="1"/>
</dbReference>
<dbReference type="Gene3D" id="3.40.1120.10">
    <property type="entry name" value="Ribosomal protein l15e"/>
    <property type="match status" value="1"/>
</dbReference>
<dbReference type="InterPro" id="IPR024794">
    <property type="entry name" value="Rbsml_eL15_core_dom_sf"/>
</dbReference>
<dbReference type="InterPro" id="IPR000439">
    <property type="entry name" value="Ribosomal_eL15"/>
</dbReference>
<dbReference type="InterPro" id="IPR020925">
    <property type="entry name" value="Ribosomal_eL15_CS"/>
</dbReference>
<dbReference type="InterPro" id="IPR012678">
    <property type="entry name" value="Ribosomal_uL23/eL15/eS24_sf"/>
</dbReference>
<dbReference type="NCBIfam" id="NF003269">
    <property type="entry name" value="PRK04243.1"/>
    <property type="match status" value="1"/>
</dbReference>
<dbReference type="PANTHER" id="PTHR11847:SF4">
    <property type="entry name" value="LARGE RIBOSOMAL SUBUNIT PROTEIN EL15"/>
    <property type="match status" value="1"/>
</dbReference>
<dbReference type="PANTHER" id="PTHR11847">
    <property type="entry name" value="RIBOSOMAL PROTEIN L15"/>
    <property type="match status" value="1"/>
</dbReference>
<dbReference type="Pfam" id="PF00827">
    <property type="entry name" value="Ribosomal_L15e"/>
    <property type="match status" value="1"/>
</dbReference>
<dbReference type="SMART" id="SM01384">
    <property type="entry name" value="Ribosomal_L15e"/>
    <property type="match status" value="1"/>
</dbReference>
<dbReference type="SUPFAM" id="SSF54189">
    <property type="entry name" value="Ribosomal proteins S24e, L23 and L15e"/>
    <property type="match status" value="1"/>
</dbReference>
<dbReference type="PROSITE" id="PS01194">
    <property type="entry name" value="RIBOSOMAL_L15E"/>
    <property type="match status" value="1"/>
</dbReference>
<keyword id="KW-0963">Cytoplasm</keyword>
<keyword id="KW-0687">Ribonucleoprotein</keyword>
<keyword id="KW-0689">Ribosomal protein</keyword>
<accession>Q7T3M9</accession>